<evidence type="ECO:0000255" key="1">
    <source>
        <dbReference type="HAMAP-Rule" id="MF_02076"/>
    </source>
</evidence>
<name>SYE_METAR</name>
<organism>
    <name type="scientific">Methanocella arvoryzae (strain DSM 22066 / NBRC 105507 / MRE50)</name>
    <dbReference type="NCBI Taxonomy" id="351160"/>
    <lineage>
        <taxon>Archaea</taxon>
        <taxon>Methanobacteriati</taxon>
        <taxon>Methanobacteriota</taxon>
        <taxon>Stenosarchaea group</taxon>
        <taxon>Methanomicrobia</taxon>
        <taxon>Methanocellales</taxon>
        <taxon>Methanocellaceae</taxon>
        <taxon>Methanocella</taxon>
    </lineage>
</organism>
<sequence length="572" mass="64577">METKDIEILIQKFALQNAYKHGSVPQAGAVTGKLLGTHPELRPHAKELMPIVQKVLADIGQMSQDEIKAKLSEIAPELIEELSVKKEVRRGLPPLDTSMLKPGQKVTLRIAPNPNGPPSLGNARGIIVNHEYARMYDGVFIMRFDDTDPSIKKPMIEAYTWYVEHAKWLGCPPDKVVAASDRLPLYYEQAEKLIDLGKAYVCTCDNEVFHDLKEAGKPCPHRETPPAENMEKWKKMLAGGYGGKEAVLRIKTDIAHKDPAMRDWVAFRIVTEPHPKTGTKYMVWPMLDFESAMEDHFLGVTHIIRGKDLMKTADKQKYIYRYLGWEYPHVSHWGRVRLLGFGKFSTSVMKKGIEAGEYRGWDDPQLPTVVALKRRGIEPEAIRNVMINMGVTETDIEFSMDTLYAENRKIVDPKANRYFFVPDPVVLKVNGAPFTTAKAPLHPQDHKRGFREMCVAENPEILIPKSDADNARPGDILRLKDLYNVRITGSDPLTGDYIGNDLSVLKQGAKIVQWVTREGGVPTRVIGPDGEFHGIAECDIRNELNNVVQFERFAFVRIDTINGVVLAYYTHP</sequence>
<accession>Q0W8L2</accession>
<protein>
    <recommendedName>
        <fullName evidence="1">Glutamate--tRNA ligase</fullName>
        <ecNumber evidence="1">6.1.1.17</ecNumber>
    </recommendedName>
    <alternativeName>
        <fullName evidence="1">Glutamyl-tRNA synthetase</fullName>
        <shortName evidence="1">GluRS</shortName>
    </alternativeName>
</protein>
<feature type="chain" id="PRO_0000367807" description="Glutamate--tRNA ligase">
    <location>
        <begin position="1"/>
        <end position="572"/>
    </location>
</feature>
<feature type="short sequence motif" description="'HIGH' region" evidence="1">
    <location>
        <begin position="112"/>
        <end position="122"/>
    </location>
</feature>
<comment type="function">
    <text evidence="1">Catalyzes the attachment of glutamate to tRNA(Glu) in a two-step reaction: glutamate is first activated by ATP to form Glu-AMP and then transferred to the acceptor end of tRNA(Glu).</text>
</comment>
<comment type="catalytic activity">
    <reaction evidence="1">
        <text>tRNA(Glu) + L-glutamate + ATP = L-glutamyl-tRNA(Glu) + AMP + diphosphate</text>
        <dbReference type="Rhea" id="RHEA:23540"/>
        <dbReference type="Rhea" id="RHEA-COMP:9663"/>
        <dbReference type="Rhea" id="RHEA-COMP:9680"/>
        <dbReference type="ChEBI" id="CHEBI:29985"/>
        <dbReference type="ChEBI" id="CHEBI:30616"/>
        <dbReference type="ChEBI" id="CHEBI:33019"/>
        <dbReference type="ChEBI" id="CHEBI:78442"/>
        <dbReference type="ChEBI" id="CHEBI:78520"/>
        <dbReference type="ChEBI" id="CHEBI:456215"/>
        <dbReference type="EC" id="6.1.1.17"/>
    </reaction>
</comment>
<comment type="subcellular location">
    <subcellularLocation>
        <location evidence="1">Cytoplasm</location>
    </subcellularLocation>
</comment>
<comment type="similarity">
    <text evidence="1">Belongs to the class-I aminoacyl-tRNA synthetase family. Glutamate--tRNA ligase type 2 subfamily.</text>
</comment>
<keyword id="KW-0030">Aminoacyl-tRNA synthetase</keyword>
<keyword id="KW-0067">ATP-binding</keyword>
<keyword id="KW-0963">Cytoplasm</keyword>
<keyword id="KW-0436">Ligase</keyword>
<keyword id="KW-0547">Nucleotide-binding</keyword>
<keyword id="KW-0648">Protein biosynthesis</keyword>
<keyword id="KW-1185">Reference proteome</keyword>
<dbReference type="EC" id="6.1.1.17" evidence="1"/>
<dbReference type="EMBL" id="AM114193">
    <property type="protein sequence ID" value="CAJ35281.1"/>
    <property type="molecule type" value="Genomic_DNA"/>
</dbReference>
<dbReference type="RefSeq" id="WP_012037209.1">
    <property type="nucleotide sequence ID" value="NC_009464.1"/>
</dbReference>
<dbReference type="SMR" id="Q0W8L2"/>
<dbReference type="STRING" id="351160.LRC306"/>
<dbReference type="GeneID" id="5143841"/>
<dbReference type="KEGG" id="rci:LRC306"/>
<dbReference type="PATRIC" id="fig|351160.9.peg.2972"/>
<dbReference type="eggNOG" id="arCOG04302">
    <property type="taxonomic scope" value="Archaea"/>
</dbReference>
<dbReference type="OrthoDB" id="10470at2157"/>
<dbReference type="Proteomes" id="UP000000663">
    <property type="component" value="Chromosome"/>
</dbReference>
<dbReference type="GO" id="GO:0005829">
    <property type="term" value="C:cytosol"/>
    <property type="evidence" value="ECO:0007669"/>
    <property type="project" value="TreeGrafter"/>
</dbReference>
<dbReference type="GO" id="GO:0005524">
    <property type="term" value="F:ATP binding"/>
    <property type="evidence" value="ECO:0007669"/>
    <property type="project" value="UniProtKB-UniRule"/>
</dbReference>
<dbReference type="GO" id="GO:0004818">
    <property type="term" value="F:glutamate-tRNA ligase activity"/>
    <property type="evidence" value="ECO:0007669"/>
    <property type="project" value="UniProtKB-UniRule"/>
</dbReference>
<dbReference type="GO" id="GO:0043604">
    <property type="term" value="P:amide biosynthetic process"/>
    <property type="evidence" value="ECO:0007669"/>
    <property type="project" value="TreeGrafter"/>
</dbReference>
<dbReference type="GO" id="GO:0006424">
    <property type="term" value="P:glutamyl-tRNA aminoacylation"/>
    <property type="evidence" value="ECO:0007669"/>
    <property type="project" value="UniProtKB-UniRule"/>
</dbReference>
<dbReference type="Gene3D" id="2.40.240.100">
    <property type="match status" value="1"/>
</dbReference>
<dbReference type="Gene3D" id="3.40.50.620">
    <property type="entry name" value="HUPs"/>
    <property type="match status" value="1"/>
</dbReference>
<dbReference type="Gene3D" id="2.40.240.10">
    <property type="entry name" value="Ribosomal Protein L25, Chain P"/>
    <property type="match status" value="1"/>
</dbReference>
<dbReference type="HAMAP" id="MF_02076">
    <property type="entry name" value="Glu_tRNA_synth_type2"/>
    <property type="match status" value="1"/>
</dbReference>
<dbReference type="InterPro" id="IPR050132">
    <property type="entry name" value="Gln/Glu-tRNA_Ligase"/>
</dbReference>
<dbReference type="InterPro" id="IPR004526">
    <property type="entry name" value="Glu-tRNA-synth_arc/euk"/>
</dbReference>
<dbReference type="InterPro" id="IPR000924">
    <property type="entry name" value="Glu/Gln-tRNA-synth"/>
</dbReference>
<dbReference type="InterPro" id="IPR020058">
    <property type="entry name" value="Glu/Gln-tRNA-synth_Ib_cat-dom"/>
</dbReference>
<dbReference type="InterPro" id="IPR020059">
    <property type="entry name" value="Glu/Gln-tRNA-synth_Ib_codon-bd"/>
</dbReference>
<dbReference type="InterPro" id="IPR020056">
    <property type="entry name" value="Rbsml_bL25/Gln-tRNA_synth_N"/>
</dbReference>
<dbReference type="InterPro" id="IPR011035">
    <property type="entry name" value="Ribosomal_bL25/Gln-tRNA_synth"/>
</dbReference>
<dbReference type="InterPro" id="IPR014729">
    <property type="entry name" value="Rossmann-like_a/b/a_fold"/>
</dbReference>
<dbReference type="InterPro" id="IPR049437">
    <property type="entry name" value="tRNA-synt_1c_C2"/>
</dbReference>
<dbReference type="NCBIfam" id="TIGR00463">
    <property type="entry name" value="gltX_arch"/>
    <property type="match status" value="1"/>
</dbReference>
<dbReference type="NCBIfam" id="NF003169">
    <property type="entry name" value="PRK04156.1"/>
    <property type="match status" value="1"/>
</dbReference>
<dbReference type="PANTHER" id="PTHR43097:SF5">
    <property type="entry name" value="GLUTAMATE--TRNA LIGASE"/>
    <property type="match status" value="1"/>
</dbReference>
<dbReference type="PANTHER" id="PTHR43097">
    <property type="entry name" value="GLUTAMINE-TRNA LIGASE"/>
    <property type="match status" value="1"/>
</dbReference>
<dbReference type="Pfam" id="PF00749">
    <property type="entry name" value="tRNA-synt_1c"/>
    <property type="match status" value="1"/>
</dbReference>
<dbReference type="Pfam" id="PF03950">
    <property type="entry name" value="tRNA-synt_1c_C"/>
    <property type="match status" value="1"/>
</dbReference>
<dbReference type="Pfam" id="PF20974">
    <property type="entry name" value="tRNA-synt_1c_C2"/>
    <property type="match status" value="1"/>
</dbReference>
<dbReference type="PRINTS" id="PR00987">
    <property type="entry name" value="TRNASYNTHGLU"/>
</dbReference>
<dbReference type="SUPFAM" id="SSF52374">
    <property type="entry name" value="Nucleotidylyl transferase"/>
    <property type="match status" value="1"/>
</dbReference>
<dbReference type="SUPFAM" id="SSF50715">
    <property type="entry name" value="Ribosomal protein L25-like"/>
    <property type="match status" value="1"/>
</dbReference>
<gene>
    <name evidence="1" type="primary">gltX</name>
    <name type="ordered locus">UNCMA_28940</name>
    <name type="ORF">LRC306</name>
</gene>
<reference key="1">
    <citation type="journal article" date="2006" name="Science">
        <title>Genome of rice cluster I archaea -- the key methane producers in the rice rhizosphere.</title>
        <authorList>
            <person name="Erkel C."/>
            <person name="Kube M."/>
            <person name="Reinhardt R."/>
            <person name="Liesack W."/>
        </authorList>
    </citation>
    <scope>NUCLEOTIDE SEQUENCE [LARGE SCALE GENOMIC DNA]</scope>
    <source>
        <strain>DSM 22066 / NBRC 105507 / MRE50</strain>
    </source>
</reference>
<proteinExistence type="inferred from homology"/>